<gene>
    <name evidence="1" type="primary">hisS</name>
    <name type="ordered locus">PMM0623</name>
</gene>
<reference key="1">
    <citation type="journal article" date="2003" name="Nature">
        <title>Genome divergence in two Prochlorococcus ecotypes reflects oceanic niche differentiation.</title>
        <authorList>
            <person name="Rocap G."/>
            <person name="Larimer F.W."/>
            <person name="Lamerdin J.E."/>
            <person name="Malfatti S."/>
            <person name="Chain P."/>
            <person name="Ahlgren N.A."/>
            <person name="Arellano A."/>
            <person name="Coleman M."/>
            <person name="Hauser L."/>
            <person name="Hess W.R."/>
            <person name="Johnson Z.I."/>
            <person name="Land M.L."/>
            <person name="Lindell D."/>
            <person name="Post A.F."/>
            <person name="Regala W."/>
            <person name="Shah M."/>
            <person name="Shaw S.L."/>
            <person name="Steglich C."/>
            <person name="Sullivan M.B."/>
            <person name="Ting C.S."/>
            <person name="Tolonen A."/>
            <person name="Webb E.A."/>
            <person name="Zinser E.R."/>
            <person name="Chisholm S.W."/>
        </authorList>
    </citation>
    <scope>NUCLEOTIDE SEQUENCE [LARGE SCALE GENOMIC DNA]</scope>
    <source>
        <strain>CCMP1986 / NIES-2087 / MED4</strain>
    </source>
</reference>
<protein>
    <recommendedName>
        <fullName evidence="1">Histidine--tRNA ligase</fullName>
        <ecNumber evidence="1">6.1.1.21</ecNumber>
    </recommendedName>
    <alternativeName>
        <fullName evidence="1">Histidyl-tRNA synthetase</fullName>
        <shortName evidence="1">HisRS</shortName>
    </alternativeName>
</protein>
<comment type="catalytic activity">
    <reaction evidence="1">
        <text>tRNA(His) + L-histidine + ATP = L-histidyl-tRNA(His) + AMP + diphosphate + H(+)</text>
        <dbReference type="Rhea" id="RHEA:17313"/>
        <dbReference type="Rhea" id="RHEA-COMP:9665"/>
        <dbReference type="Rhea" id="RHEA-COMP:9689"/>
        <dbReference type="ChEBI" id="CHEBI:15378"/>
        <dbReference type="ChEBI" id="CHEBI:30616"/>
        <dbReference type="ChEBI" id="CHEBI:33019"/>
        <dbReference type="ChEBI" id="CHEBI:57595"/>
        <dbReference type="ChEBI" id="CHEBI:78442"/>
        <dbReference type="ChEBI" id="CHEBI:78527"/>
        <dbReference type="ChEBI" id="CHEBI:456215"/>
        <dbReference type="EC" id="6.1.1.21"/>
    </reaction>
</comment>
<comment type="subunit">
    <text evidence="1">Homodimer.</text>
</comment>
<comment type="subcellular location">
    <subcellularLocation>
        <location evidence="1">Cytoplasm</location>
    </subcellularLocation>
</comment>
<comment type="similarity">
    <text evidence="1">Belongs to the class-II aminoacyl-tRNA synthetase family.</text>
</comment>
<accession>Q7V263</accession>
<feature type="chain" id="PRO_0000136223" description="Histidine--tRNA ligase">
    <location>
        <begin position="1"/>
        <end position="429"/>
    </location>
</feature>
<sequence length="429" mass="49170">MNNFKNLRGTVDLLPDQLIKWQNVEKIIIQQLFRSSVKEIRTPILEMTELFMRGIGEGTDVVSKEMYTFLDRGERSCTLRPEGTASVARALIQHGISTRPSQKLWYMGPMFRYERPQAGRQRQFHQLGVEFIGYESVNSDIEIITLAWDILQKLGIKELNLEINTLGDHIDRSNFQKAFLKWLEVNKNSLDLDSQRRIDKNPLRILDTKNVQTKQILKGAPRLFDFLSEKSLERYLIIKEKLKLLKIPFIENFNLVRGLDYYTHTAFEITTGTLGSQATVCGGGRYDSLISQMGGAETPAIGFAIGLERLIILCGSELEETRETDIYIVNKGIHAEILAMELSRKLRNYDLVVELDLSGASFSKQFKKANKLKSKSIIVIGDDEAVKNEFVIRLFNNDNSVNKEETISIEDNMKLEKWIKSNLILDKNL</sequence>
<name>SYH_PROMP</name>
<evidence type="ECO:0000255" key="1">
    <source>
        <dbReference type="HAMAP-Rule" id="MF_00127"/>
    </source>
</evidence>
<dbReference type="EC" id="6.1.1.21" evidence="1"/>
<dbReference type="EMBL" id="BX548174">
    <property type="protein sequence ID" value="CAE19082.1"/>
    <property type="molecule type" value="Genomic_DNA"/>
</dbReference>
<dbReference type="RefSeq" id="WP_011132257.1">
    <property type="nucleotide sequence ID" value="NC_005072.1"/>
</dbReference>
<dbReference type="SMR" id="Q7V263"/>
<dbReference type="STRING" id="59919.PMM0623"/>
<dbReference type="KEGG" id="pmm:PMM0623"/>
<dbReference type="eggNOG" id="COG0124">
    <property type="taxonomic scope" value="Bacteria"/>
</dbReference>
<dbReference type="HOGENOM" id="CLU_025113_1_1_3"/>
<dbReference type="OrthoDB" id="9800814at2"/>
<dbReference type="Proteomes" id="UP000001026">
    <property type="component" value="Chromosome"/>
</dbReference>
<dbReference type="GO" id="GO:0005737">
    <property type="term" value="C:cytoplasm"/>
    <property type="evidence" value="ECO:0007669"/>
    <property type="project" value="UniProtKB-SubCell"/>
</dbReference>
<dbReference type="GO" id="GO:0005524">
    <property type="term" value="F:ATP binding"/>
    <property type="evidence" value="ECO:0007669"/>
    <property type="project" value="UniProtKB-UniRule"/>
</dbReference>
<dbReference type="GO" id="GO:0004821">
    <property type="term" value="F:histidine-tRNA ligase activity"/>
    <property type="evidence" value="ECO:0007669"/>
    <property type="project" value="UniProtKB-UniRule"/>
</dbReference>
<dbReference type="GO" id="GO:0006427">
    <property type="term" value="P:histidyl-tRNA aminoacylation"/>
    <property type="evidence" value="ECO:0007669"/>
    <property type="project" value="UniProtKB-UniRule"/>
</dbReference>
<dbReference type="CDD" id="cd00773">
    <property type="entry name" value="HisRS-like_core"/>
    <property type="match status" value="1"/>
</dbReference>
<dbReference type="Gene3D" id="3.40.50.800">
    <property type="entry name" value="Anticodon-binding domain"/>
    <property type="match status" value="1"/>
</dbReference>
<dbReference type="Gene3D" id="3.30.930.10">
    <property type="entry name" value="Bira Bifunctional Protein, Domain 2"/>
    <property type="match status" value="1"/>
</dbReference>
<dbReference type="HAMAP" id="MF_00127">
    <property type="entry name" value="His_tRNA_synth"/>
    <property type="match status" value="1"/>
</dbReference>
<dbReference type="InterPro" id="IPR006195">
    <property type="entry name" value="aa-tRNA-synth_II"/>
</dbReference>
<dbReference type="InterPro" id="IPR045864">
    <property type="entry name" value="aa-tRNA-synth_II/BPL/LPL"/>
</dbReference>
<dbReference type="InterPro" id="IPR004154">
    <property type="entry name" value="Anticodon-bd"/>
</dbReference>
<dbReference type="InterPro" id="IPR036621">
    <property type="entry name" value="Anticodon-bd_dom_sf"/>
</dbReference>
<dbReference type="InterPro" id="IPR015807">
    <property type="entry name" value="His-tRNA-ligase"/>
</dbReference>
<dbReference type="InterPro" id="IPR041715">
    <property type="entry name" value="HisRS-like_core"/>
</dbReference>
<dbReference type="InterPro" id="IPR004516">
    <property type="entry name" value="HisRS/HisZ"/>
</dbReference>
<dbReference type="NCBIfam" id="TIGR00442">
    <property type="entry name" value="hisS"/>
    <property type="match status" value="1"/>
</dbReference>
<dbReference type="PANTHER" id="PTHR43707:SF1">
    <property type="entry name" value="HISTIDINE--TRNA LIGASE, MITOCHONDRIAL-RELATED"/>
    <property type="match status" value="1"/>
</dbReference>
<dbReference type="PANTHER" id="PTHR43707">
    <property type="entry name" value="HISTIDYL-TRNA SYNTHETASE"/>
    <property type="match status" value="1"/>
</dbReference>
<dbReference type="Pfam" id="PF03129">
    <property type="entry name" value="HGTP_anticodon"/>
    <property type="match status" value="1"/>
</dbReference>
<dbReference type="Pfam" id="PF13393">
    <property type="entry name" value="tRNA-synt_His"/>
    <property type="match status" value="1"/>
</dbReference>
<dbReference type="PIRSF" id="PIRSF001549">
    <property type="entry name" value="His-tRNA_synth"/>
    <property type="match status" value="1"/>
</dbReference>
<dbReference type="SUPFAM" id="SSF52954">
    <property type="entry name" value="Class II aaRS ABD-related"/>
    <property type="match status" value="1"/>
</dbReference>
<dbReference type="SUPFAM" id="SSF55681">
    <property type="entry name" value="Class II aaRS and biotin synthetases"/>
    <property type="match status" value="1"/>
</dbReference>
<dbReference type="PROSITE" id="PS50862">
    <property type="entry name" value="AA_TRNA_LIGASE_II"/>
    <property type="match status" value="1"/>
</dbReference>
<organism>
    <name type="scientific">Prochlorococcus marinus subsp. pastoris (strain CCMP1986 / NIES-2087 / MED4)</name>
    <dbReference type="NCBI Taxonomy" id="59919"/>
    <lineage>
        <taxon>Bacteria</taxon>
        <taxon>Bacillati</taxon>
        <taxon>Cyanobacteriota</taxon>
        <taxon>Cyanophyceae</taxon>
        <taxon>Synechococcales</taxon>
        <taxon>Prochlorococcaceae</taxon>
        <taxon>Prochlorococcus</taxon>
    </lineage>
</organism>
<keyword id="KW-0030">Aminoacyl-tRNA synthetase</keyword>
<keyword id="KW-0067">ATP-binding</keyword>
<keyword id="KW-0963">Cytoplasm</keyword>
<keyword id="KW-0436">Ligase</keyword>
<keyword id="KW-0547">Nucleotide-binding</keyword>
<keyword id="KW-0648">Protein biosynthesis</keyword>
<proteinExistence type="inferred from homology"/>